<comment type="function">
    <text evidence="5 6 7">Mediates SOST-dependent inhibition of bone formation. Functions as a specific facilitator of SOST-mediated inhibition of Wnt signaling. Plays a key role in the formation and the maintenance of the neuromuscular junction (NMJ), the synapse between motor neuron and skeletal muscle. Directly binds AGRIN and recruits it to the MUSK signaling complex. Mediates the AGRIN-induced phosphorylation of MUSK, the kinase of the complex. The activation of MUSK in myotubes induces the formation of NMJ by regulating different processes including the transcription of specific genes and the clustering of AChR in the postsynaptic membrane. Alternatively, may be involved in the negative regulation of the canonical Wnt signaling pathway, being able to antagonize the LRP6-mediated activation of this pathway. More generally, has been proposed to function as a cell surface endocytic receptor binding and internalizing extracellular ligands for degradation by lysosomes. Plays an essential role in the process of digit differentiation (PubMed:16517118).</text>
</comment>
<comment type="subunit">
    <text evidence="1 8">Homooligomer. Interacts with MUSK; the heterodimer forms an AGRIN receptor complex that binds AGRIN resulting in activation of MUSK. Interacts (via the extracellular domain) with SOST; the interaction facilitates the inhibition of Wnt signaling (By similarity). Interacts with MESD; the interaction promotes glycosylation of LRP4 and its cell-surface expression (PubMed:24140340).</text>
</comment>
<comment type="interaction">
    <interactant intactId="EBI-2106160">
        <id>Q8VI56</id>
    </interactant>
    <interactant intactId="EBI-6662606">
        <id>Q9ERE7</id>
        <label>Mesd</label>
    </interactant>
    <organismsDiffer>false</organismsDiffer>
    <experiments>2</experiments>
</comment>
<comment type="interaction">
    <interactant intactId="EBI-2106160">
        <id>Q8VI56</id>
    </interactant>
    <interactant intactId="EBI-2106099">
        <id>P25304</id>
        <label>Agrn</label>
    </interactant>
    <organismsDiffer>true</organismsDiffer>
    <experiments>3</experiments>
</comment>
<comment type="subcellular location">
    <subcellularLocation>
        <location evidence="8">Cell membrane</location>
        <topology evidence="10">Single-pass type I membrane protein</topology>
    </subcellularLocation>
</comment>
<comment type="alternative products">
    <event type="alternative splicing"/>
    <isoform>
        <id>Q8VI56-1</id>
        <name>1</name>
        <sequence type="displayed"/>
    </isoform>
    <isoform>
        <id>Q8VI56-2</id>
        <name>2</name>
        <sequence type="described" ref="VSP_010034"/>
    </isoform>
</comment>
<comment type="PTM">
    <text evidence="8">N-glycosylation is required for cell surface location.</text>
</comment>
<comment type="disease">
    <text evidence="5">Defects in Lrp4 are the cause of digitation anormale (dan) phenotype, this mutation is the consequence of a retroviral insertion. Dan mice shown growth retardation in 10-day-old mice dan/dan and polysyndactyly (PubMed:16517118). Defects in Lrp4 are the cause of malformed digits (mdig) phenotype. It is a spontaneous, autosomal recessive mutation resulting in polysyndactyly (PubMed:16517118).</text>
</comment>
<comment type="similarity">
    <text evidence="10">Belongs to the LDLR family.</text>
</comment>
<comment type="sequence caution" evidence="10">
    <conflict type="miscellaneous discrepancy">
        <sequence resource="EMBL-CDS" id="BAC27835"/>
    </conflict>
    <text>Intron retention.</text>
</comment>
<comment type="sequence caution" evidence="10">
    <conflict type="miscellaneous discrepancy">
        <sequence resource="EMBL-CDS" id="BAC29416"/>
    </conflict>
    <text>Intron retention.</text>
</comment>
<evidence type="ECO:0000250" key="1"/>
<evidence type="ECO:0000255" key="2"/>
<evidence type="ECO:0000255" key="3">
    <source>
        <dbReference type="PROSITE-ProRule" id="PRU00124"/>
    </source>
</evidence>
<evidence type="ECO:0000256" key="4">
    <source>
        <dbReference type="SAM" id="MobiDB-lite"/>
    </source>
</evidence>
<evidence type="ECO:0000269" key="5">
    <source>
    </source>
</evidence>
<evidence type="ECO:0000269" key="6">
    <source>
    </source>
</evidence>
<evidence type="ECO:0000269" key="7">
    <source>
    </source>
</evidence>
<evidence type="ECO:0000269" key="8">
    <source>
    </source>
</evidence>
<evidence type="ECO:0000303" key="9">
    <source>
    </source>
</evidence>
<evidence type="ECO:0000305" key="10"/>
<gene>
    <name type="primary">Lrp4</name>
    <name type="synonym">Kiaa0816</name>
</gene>
<name>LRP4_MOUSE</name>
<organism>
    <name type="scientific">Mus musculus</name>
    <name type="common">Mouse</name>
    <dbReference type="NCBI Taxonomy" id="10090"/>
    <lineage>
        <taxon>Eukaryota</taxon>
        <taxon>Metazoa</taxon>
        <taxon>Chordata</taxon>
        <taxon>Craniata</taxon>
        <taxon>Vertebrata</taxon>
        <taxon>Euteleostomi</taxon>
        <taxon>Mammalia</taxon>
        <taxon>Eutheria</taxon>
        <taxon>Euarchontoglires</taxon>
        <taxon>Glires</taxon>
        <taxon>Rodentia</taxon>
        <taxon>Myomorpha</taxon>
        <taxon>Muroidea</taxon>
        <taxon>Muridae</taxon>
        <taxon>Murinae</taxon>
        <taxon>Mus</taxon>
        <taxon>Mus</taxon>
    </lineage>
</organism>
<sequence>MRRWWGALLLGALLCAHGIASSLECACGRSHFTCAVSALGECTCIPAQWQCDGDNDCGDHSDEDGCTLPTCSPLDFHCDNGKCIRRSWVCDGDNDCEDDSDEQDCPPRECEEDEFPCQNGYCIRSLWHCDGDNDCGDNSDEQCDMRKCSDKEFRCSDGSCIAEHWYCDGDTDCKDGSDEESCPSAVPSPPCNLEEFQCAYGRCILDIYHCDGDDDCGDWSDESDCSSHQPCRSGEFMCDSGLCINSGWRCDGDADCDDQSDERNCTTSMCTAEQFRCRSGRCVRLSWRCDGEDDCADNSDEENCENTGSPQCASDQFLCWNGRCIGQRKLCNGINDCGDSSDESPQQNCRPRTGEENCNVNNGGCAQKCQMVRGAVQCTCHTGYRLTEDGRTCQDVNECAEEGYCSQGCTNTEGAFQCWCEAGYELRPDRRSCKALGPEPVLLFANRIDIRQVLPHRSEYTLLLNNLENAIALDFHHRRELVFWSDVTLDRILRANLNGSNVEEVVSTGLESPGGLAVDWVHDKLYWTDSGTSRIEVANLDGAHRKVLLWQSLEKPRAIALHPMEGTIYWTDWGNTPRIEASSMDGSGRRIIADTHLFWPNGLTIDYAGRRMYWVDAKHHVIERANLDGSHRKAVISQGLPHPFAITVFEDSLYWTDWHTKSINSANKFTGKNQEIIRNKLHFPMDIHTLHPQRQPAGKNRCGDNNGGCTHLCLPSGQNYTCACPTGFRKINSHACAQSLDKFLLFARRMDIRRISFDTEDLSDDVIPLADVRSAVALDWDSRDDHVYWTDVSTDTISRAKWDGTGQEVVVDTSLESPAGLAIDWVTNKLYWTDAGTDRIEVANTDGSMRTVLIWENLDRPRDIVVEPMGGYMYWTDWGASPKIERAGMDASSRQVIISSNLTWPNGLAIDYGSQRLYWADAGMKTIEFAGLDGSKRKVLIGSQLPHPFGLTLYGQRIYWTDWQTKSIQSADRLTGLDRETLQENLENLMDIHVFHRQRPPVTTLCAVENGGCSHLCLRSPNPSGFSCTCPTGINLLRDGKTCSPGMNSFLIFARRIDVRMVSLDIPYFADVVVPINMTMKNTIAIGVDPLEGKVYWSDSTLHRISRASLDGSQHEDIITTGLQTTDGLAVDAIGRKVYWTDTGTNRIEVGNLDGSMRKVLVWQNLDSPRAIVLYHEMGFMYWTDWGENAKLERSGMDGSDRTVLINNNLGWPNGLTVDKTSSQLLWADAHTERIEVADLNGANRHTLVSPVQHPYGLTLLDSYIYWTDWQTRSIHRADKSTGSNVILVRSNLPGLMDIQAVDRAQPLGFNKCGSRNGGCSHLCLPRPSGFSCACPTGIQLKGDRKTCDPSPETYLLFSSRGSIRRISLDTDDHTDVHVPVPGLNNVISLDYDSVHGKVYYTDVFLDVIRRADLNGSNMETVIGHGLKTTDGLAVDWVARNLYWTDTGRNTIEASRLDGSCRKVLINNSLDEPRAIAVFPRKGYLFWTDWGHIAKIERANLDGSERKVLINTDLGWPNGLTLDYDTRRIYWVDAHLDRIESADLNGKLRQVLVSHVSHPFALTQQDRWIYWTDWQTKSIQRVDKYSGRNKETVLANVEGLMDIIVVSPQRQTGTNACGVNNGGCTHLCFARASDFVCACPDEPDGHPCSLVPGLVPPAPRATSMNEKSPVLPNTLPTTLHSSTTKTRTSLEGAGGRCSERDAQLGLCAHSNEAVPAAPGEGLHVSYAIGGLLSILLILLVIAALMLYRHRKSKFTDPGMGNLTYSNPSYRTSTQEVKLEAAPKPAVYNQLCYKKEGGPDHSYTKEKIKIVEGIRLLAGDDAEWGDLKQLRSSRGGLLRDHVCMKTDTVSIQASSGSLDDTETEQLLQEEQSECSSVHTAATPERRGSLPDTGWKHERKLSSESQV</sequence>
<keyword id="KW-0025">Alternative splicing</keyword>
<keyword id="KW-0106">Calcium</keyword>
<keyword id="KW-1003">Cell membrane</keyword>
<keyword id="KW-0217">Developmental protein</keyword>
<keyword id="KW-0221">Differentiation</keyword>
<keyword id="KW-1015">Disulfide bond</keyword>
<keyword id="KW-0245">EGF-like domain</keyword>
<keyword id="KW-0254">Endocytosis</keyword>
<keyword id="KW-0325">Glycoprotein</keyword>
<keyword id="KW-0472">Membrane</keyword>
<keyword id="KW-0675">Receptor</keyword>
<keyword id="KW-1185">Reference proteome</keyword>
<keyword id="KW-0677">Repeat</keyword>
<keyword id="KW-0732">Signal</keyword>
<keyword id="KW-0812">Transmembrane</keyword>
<keyword id="KW-1133">Transmembrane helix</keyword>
<keyword id="KW-0879">Wnt signaling pathway</keyword>
<reference key="1">
    <citation type="journal article" date="2006" name="Genomics">
        <title>Mutations in the gene encoding the low-density lipoprotein receptor LRP4 cause abnormal limb development in the mouse.</title>
        <authorList>
            <person name="Simon-Chazottes D."/>
            <person name="Tutois S."/>
            <person name="Kuehn M."/>
            <person name="Evans M."/>
            <person name="Bourgade F."/>
            <person name="Cook S."/>
            <person name="Davisson M.T."/>
            <person name="Guenet J.L."/>
        </authorList>
    </citation>
    <scope>NUCLEOTIDE SEQUENCE [MRNA] (ISOFORM 1)</scope>
    <scope>DISEASE</scope>
    <source>
        <strain>C57BL/6J</strain>
    </source>
</reference>
<reference key="2">
    <citation type="journal article" date="2009" name="PLoS Biol.">
        <title>Lineage-specific biology revealed by a finished genome assembly of the mouse.</title>
        <authorList>
            <person name="Church D.M."/>
            <person name="Goodstadt L."/>
            <person name="Hillier L.W."/>
            <person name="Zody M.C."/>
            <person name="Goldstein S."/>
            <person name="She X."/>
            <person name="Bult C.J."/>
            <person name="Agarwala R."/>
            <person name="Cherry J.L."/>
            <person name="DiCuccio M."/>
            <person name="Hlavina W."/>
            <person name="Kapustin Y."/>
            <person name="Meric P."/>
            <person name="Maglott D."/>
            <person name="Birtle Z."/>
            <person name="Marques A.C."/>
            <person name="Graves T."/>
            <person name="Zhou S."/>
            <person name="Teague B."/>
            <person name="Potamousis K."/>
            <person name="Churas C."/>
            <person name="Place M."/>
            <person name="Herschleb J."/>
            <person name="Runnheim R."/>
            <person name="Forrest D."/>
            <person name="Amos-Landgraf J."/>
            <person name="Schwartz D.C."/>
            <person name="Cheng Z."/>
            <person name="Lindblad-Toh K."/>
            <person name="Eichler E.E."/>
            <person name="Ponting C.P."/>
        </authorList>
    </citation>
    <scope>NUCLEOTIDE SEQUENCE [LARGE SCALE GENOMIC DNA]</scope>
    <source>
        <strain>C57BL/6J</strain>
    </source>
</reference>
<reference key="3">
    <citation type="journal article" date="2004" name="Genome Res.">
        <title>The status, quality, and expansion of the NIH full-length cDNA project: the Mammalian Gene Collection (MGC).</title>
        <authorList>
            <consortium name="The MGC Project Team"/>
        </authorList>
    </citation>
    <scope>NUCLEOTIDE SEQUENCE [LARGE SCALE MRNA] (ISOFORM 1)</scope>
    <source>
        <tissue>Brain</tissue>
    </source>
</reference>
<reference key="4">
    <citation type="journal article" date="2005" name="Science">
        <title>The transcriptional landscape of the mammalian genome.</title>
        <authorList>
            <person name="Carninci P."/>
            <person name="Kasukawa T."/>
            <person name="Katayama S."/>
            <person name="Gough J."/>
            <person name="Frith M.C."/>
            <person name="Maeda N."/>
            <person name="Oyama R."/>
            <person name="Ravasi T."/>
            <person name="Lenhard B."/>
            <person name="Wells C."/>
            <person name="Kodzius R."/>
            <person name="Shimokawa K."/>
            <person name="Bajic V.B."/>
            <person name="Brenner S.E."/>
            <person name="Batalov S."/>
            <person name="Forrest A.R."/>
            <person name="Zavolan M."/>
            <person name="Davis M.J."/>
            <person name="Wilming L.G."/>
            <person name="Aidinis V."/>
            <person name="Allen J.E."/>
            <person name="Ambesi-Impiombato A."/>
            <person name="Apweiler R."/>
            <person name="Aturaliya R.N."/>
            <person name="Bailey T.L."/>
            <person name="Bansal M."/>
            <person name="Baxter L."/>
            <person name="Beisel K.W."/>
            <person name="Bersano T."/>
            <person name="Bono H."/>
            <person name="Chalk A.M."/>
            <person name="Chiu K.P."/>
            <person name="Choudhary V."/>
            <person name="Christoffels A."/>
            <person name="Clutterbuck D.R."/>
            <person name="Crowe M.L."/>
            <person name="Dalla E."/>
            <person name="Dalrymple B.P."/>
            <person name="de Bono B."/>
            <person name="Della Gatta G."/>
            <person name="di Bernardo D."/>
            <person name="Down T."/>
            <person name="Engstrom P."/>
            <person name="Fagiolini M."/>
            <person name="Faulkner G."/>
            <person name="Fletcher C.F."/>
            <person name="Fukushima T."/>
            <person name="Furuno M."/>
            <person name="Futaki S."/>
            <person name="Gariboldi M."/>
            <person name="Georgii-Hemming P."/>
            <person name="Gingeras T.R."/>
            <person name="Gojobori T."/>
            <person name="Green R.E."/>
            <person name="Gustincich S."/>
            <person name="Harbers M."/>
            <person name="Hayashi Y."/>
            <person name="Hensch T.K."/>
            <person name="Hirokawa N."/>
            <person name="Hill D."/>
            <person name="Huminiecki L."/>
            <person name="Iacono M."/>
            <person name="Ikeo K."/>
            <person name="Iwama A."/>
            <person name="Ishikawa T."/>
            <person name="Jakt M."/>
            <person name="Kanapin A."/>
            <person name="Katoh M."/>
            <person name="Kawasawa Y."/>
            <person name="Kelso J."/>
            <person name="Kitamura H."/>
            <person name="Kitano H."/>
            <person name="Kollias G."/>
            <person name="Krishnan S.P."/>
            <person name="Kruger A."/>
            <person name="Kummerfeld S.K."/>
            <person name="Kurochkin I.V."/>
            <person name="Lareau L.F."/>
            <person name="Lazarevic D."/>
            <person name="Lipovich L."/>
            <person name="Liu J."/>
            <person name="Liuni S."/>
            <person name="McWilliam S."/>
            <person name="Madan Babu M."/>
            <person name="Madera M."/>
            <person name="Marchionni L."/>
            <person name="Matsuda H."/>
            <person name="Matsuzawa S."/>
            <person name="Miki H."/>
            <person name="Mignone F."/>
            <person name="Miyake S."/>
            <person name="Morris K."/>
            <person name="Mottagui-Tabar S."/>
            <person name="Mulder N."/>
            <person name="Nakano N."/>
            <person name="Nakauchi H."/>
            <person name="Ng P."/>
            <person name="Nilsson R."/>
            <person name="Nishiguchi S."/>
            <person name="Nishikawa S."/>
            <person name="Nori F."/>
            <person name="Ohara O."/>
            <person name="Okazaki Y."/>
            <person name="Orlando V."/>
            <person name="Pang K.C."/>
            <person name="Pavan W.J."/>
            <person name="Pavesi G."/>
            <person name="Pesole G."/>
            <person name="Petrovsky N."/>
            <person name="Piazza S."/>
            <person name="Reed J."/>
            <person name="Reid J.F."/>
            <person name="Ring B.Z."/>
            <person name="Ringwald M."/>
            <person name="Rost B."/>
            <person name="Ruan Y."/>
            <person name="Salzberg S.L."/>
            <person name="Sandelin A."/>
            <person name="Schneider C."/>
            <person name="Schoenbach C."/>
            <person name="Sekiguchi K."/>
            <person name="Semple C.A."/>
            <person name="Seno S."/>
            <person name="Sessa L."/>
            <person name="Sheng Y."/>
            <person name="Shibata Y."/>
            <person name="Shimada H."/>
            <person name="Shimada K."/>
            <person name="Silva D."/>
            <person name="Sinclair B."/>
            <person name="Sperling S."/>
            <person name="Stupka E."/>
            <person name="Sugiura K."/>
            <person name="Sultana R."/>
            <person name="Takenaka Y."/>
            <person name="Taki K."/>
            <person name="Tammoja K."/>
            <person name="Tan S.L."/>
            <person name="Tang S."/>
            <person name="Taylor M.S."/>
            <person name="Tegner J."/>
            <person name="Teichmann S.A."/>
            <person name="Ueda H.R."/>
            <person name="van Nimwegen E."/>
            <person name="Verardo R."/>
            <person name="Wei C.L."/>
            <person name="Yagi K."/>
            <person name="Yamanishi H."/>
            <person name="Zabarovsky E."/>
            <person name="Zhu S."/>
            <person name="Zimmer A."/>
            <person name="Hide W."/>
            <person name="Bult C."/>
            <person name="Grimmond S.M."/>
            <person name="Teasdale R.D."/>
            <person name="Liu E.T."/>
            <person name="Brusic V."/>
            <person name="Quackenbush J."/>
            <person name="Wahlestedt C."/>
            <person name="Mattick J.S."/>
            <person name="Hume D.A."/>
            <person name="Kai C."/>
            <person name="Sasaki D."/>
            <person name="Tomaru Y."/>
            <person name="Fukuda S."/>
            <person name="Kanamori-Katayama M."/>
            <person name="Suzuki M."/>
            <person name="Aoki J."/>
            <person name="Arakawa T."/>
            <person name="Iida J."/>
            <person name="Imamura K."/>
            <person name="Itoh M."/>
            <person name="Kato T."/>
            <person name="Kawaji H."/>
            <person name="Kawagashira N."/>
            <person name="Kawashima T."/>
            <person name="Kojima M."/>
            <person name="Kondo S."/>
            <person name="Konno H."/>
            <person name="Nakano K."/>
            <person name="Ninomiya N."/>
            <person name="Nishio T."/>
            <person name="Okada M."/>
            <person name="Plessy C."/>
            <person name="Shibata K."/>
            <person name="Shiraki T."/>
            <person name="Suzuki S."/>
            <person name="Tagami M."/>
            <person name="Waki K."/>
            <person name="Watahiki A."/>
            <person name="Okamura-Oho Y."/>
            <person name="Suzuki H."/>
            <person name="Kawai J."/>
            <person name="Hayashizaki Y."/>
        </authorList>
    </citation>
    <scope>NUCLEOTIDE SEQUENCE [LARGE SCALE MRNA] OF 1-566 (ISOFORMS 1/2)</scope>
    <source>
        <strain>C57BL/6J</strain>
        <tissue>Bone</tissue>
        <tissue>Olfactory bulb</tissue>
    </source>
</reference>
<reference key="5">
    <citation type="journal article" date="2003" name="DNA Res.">
        <title>Prediction of the coding sequences of mouse homologues of KIAA gene: III. The complete nucleotide sequences of 500 mouse KIAA-homologous cDNAs identified by screening of terminal sequences of cDNA clones randomly sampled from size-fractionated libraries.</title>
        <authorList>
            <person name="Okazaki N."/>
            <person name="Kikuno R."/>
            <person name="Ohara R."/>
            <person name="Inamoto S."/>
            <person name="Koseki H."/>
            <person name="Hiraoka S."/>
            <person name="Saga Y."/>
            <person name="Nagase T."/>
            <person name="Ohara O."/>
            <person name="Koga H."/>
        </authorList>
    </citation>
    <scope>NUCLEOTIDE SEQUENCE [LARGE SCALE MRNA] OF 682-1905 (ISOFORM 2)</scope>
    <source>
        <tissue>Brain</tissue>
    </source>
</reference>
<reference key="6">
    <citation type="journal article" date="2008" name="Cell">
        <title>Lrp4 is a receptor for Agrin and forms a complex with MuSK.</title>
        <authorList>
            <person name="Kim N."/>
            <person name="Stiegler A.L."/>
            <person name="Cameron T.O."/>
            <person name="Hallock P.T."/>
            <person name="Gomez A.M."/>
            <person name="Huang J.H."/>
            <person name="Hubbard S.R."/>
            <person name="Dustin M.L."/>
            <person name="Burden S.J."/>
        </authorList>
    </citation>
    <scope>FUNCTION IN NEUROMUSCULAR JUNCTION DEVELOPMENT</scope>
    <scope>FUNCTION AS RECEPTOR FOR AGRIN</scope>
    <scope>INTERACTION WITH AGRIN AND MUSK</scope>
</reference>
<reference key="7">
    <citation type="journal article" date="2010" name="Cell">
        <title>A tissue-specific atlas of mouse protein phosphorylation and expression.</title>
        <authorList>
            <person name="Huttlin E.L."/>
            <person name="Jedrychowski M.P."/>
            <person name="Elias J.E."/>
            <person name="Goswami T."/>
            <person name="Rad R."/>
            <person name="Beausoleil S.A."/>
            <person name="Villen J."/>
            <person name="Haas W."/>
            <person name="Sowa M.E."/>
            <person name="Gygi S.P."/>
        </authorList>
    </citation>
    <scope>IDENTIFICATION BY MASS SPECTROMETRY [LARGE SCALE ANALYSIS]</scope>
    <source>
        <tissue>Brain</tissue>
        <tissue>Lung</tissue>
    </source>
</reference>
<reference key="8">
    <citation type="journal article" date="2011" name="J. Biol. Chem.">
        <title>Bone overgrowth-associated mutations in the LRP4 gene impair sclerostin facilitator function.</title>
        <authorList>
            <person name="Leupin O."/>
            <person name="Piters E."/>
            <person name="Halleux C."/>
            <person name="Hu S."/>
            <person name="Kramer I."/>
            <person name="Morvan F."/>
            <person name="Bouwmeester T."/>
            <person name="Schirle M."/>
            <person name="Bueno-Lozano M."/>
            <person name="Fuentes F.J."/>
            <person name="Itin P.H."/>
            <person name="Boudin E."/>
            <person name="de Freitas F."/>
            <person name="Jennes K."/>
            <person name="Brannetti B."/>
            <person name="Charara N."/>
            <person name="Ebersbach H."/>
            <person name="Geisse S."/>
            <person name="Lu C.X."/>
            <person name="Bauer A."/>
            <person name="Van Hul W."/>
            <person name="Kneissel M."/>
        </authorList>
    </citation>
    <scope>FUNCTION</scope>
</reference>
<reference key="9">
    <citation type="journal article" date="2013" name="FEBS Lett.">
        <title>Mesdc2 plays a key role in cell-surface expression of Lrp4 and postsynaptic specialization in myotubes.</title>
        <authorList>
            <person name="Hoshi T."/>
            <person name="Tezuka T."/>
            <person name="Yokoyama K."/>
            <person name="Iemura S."/>
            <person name="Natsume T."/>
            <person name="Yamanashi Y."/>
        </authorList>
    </citation>
    <scope>INTERACTION WITH MESD</scope>
    <scope>GLYCOSYLATION</scope>
    <scope>SUBCELLULAR LOCATION</scope>
    <scope>FUNCTION</scope>
</reference>
<dbReference type="EMBL" id="AF247637">
    <property type="protein sequence ID" value="AAL36970.1"/>
    <property type="molecule type" value="mRNA"/>
</dbReference>
<dbReference type="EMBL" id="AL691489">
    <property type="status" value="NOT_ANNOTATED_CDS"/>
    <property type="molecule type" value="Genomic_DNA"/>
</dbReference>
<dbReference type="EMBL" id="AL732478">
    <property type="status" value="NOT_ANNOTATED_CDS"/>
    <property type="molecule type" value="Genomic_DNA"/>
</dbReference>
<dbReference type="EMBL" id="BC132240">
    <property type="protein sequence ID" value="AAI32241.1"/>
    <property type="molecule type" value="mRNA"/>
</dbReference>
<dbReference type="EMBL" id="AK032360">
    <property type="protein sequence ID" value="BAC27835.1"/>
    <property type="status" value="ALT_TERM"/>
    <property type="molecule type" value="mRNA"/>
</dbReference>
<dbReference type="EMBL" id="AK036406">
    <property type="protein sequence ID" value="BAC29416.1"/>
    <property type="status" value="ALT_SEQ"/>
    <property type="molecule type" value="mRNA"/>
</dbReference>
<dbReference type="EMBL" id="AK129224">
    <property type="protein sequence ID" value="BAC98034.1"/>
    <property type="molecule type" value="Transcribed_RNA"/>
</dbReference>
<dbReference type="CCDS" id="CCDS16432.1">
    <molecule id="Q8VI56-1"/>
</dbReference>
<dbReference type="RefSeq" id="NP_001139329.1">
    <property type="nucleotide sequence ID" value="NM_001145857.1"/>
</dbReference>
<dbReference type="RefSeq" id="NP_766256.3">
    <molecule id="Q8VI56-1"/>
    <property type="nucleotide sequence ID" value="NM_172668.3"/>
</dbReference>
<dbReference type="SMR" id="Q8VI56"/>
<dbReference type="BioGRID" id="230726">
    <property type="interactions" value="4"/>
</dbReference>
<dbReference type="CORUM" id="Q8VI56"/>
<dbReference type="FunCoup" id="Q8VI56">
    <property type="interactions" value="638"/>
</dbReference>
<dbReference type="IntAct" id="Q8VI56">
    <property type="interactions" value="14"/>
</dbReference>
<dbReference type="MINT" id="Q8VI56"/>
<dbReference type="STRING" id="10090.ENSMUSP00000028689"/>
<dbReference type="GlyConnect" id="2486">
    <property type="glycosylation" value="1 N-Linked glycan (1 site)"/>
</dbReference>
<dbReference type="GlyCosmos" id="Q8VI56">
    <property type="glycosylation" value="7 sites, 1 glycan"/>
</dbReference>
<dbReference type="GlyGen" id="Q8VI56">
    <property type="glycosylation" value="8 sites, 6 N-linked glycans (7 sites)"/>
</dbReference>
<dbReference type="iPTMnet" id="Q8VI56"/>
<dbReference type="PhosphoSitePlus" id="Q8VI56"/>
<dbReference type="PaxDb" id="10090-ENSMUSP00000028689"/>
<dbReference type="PeptideAtlas" id="Q8VI56"/>
<dbReference type="ProteomicsDB" id="252678">
    <molecule id="Q8VI56-1"/>
</dbReference>
<dbReference type="ProteomicsDB" id="252679">
    <molecule id="Q8VI56-2"/>
</dbReference>
<dbReference type="ABCD" id="Q8VI56">
    <property type="antibodies" value="2 sequenced antibodies"/>
</dbReference>
<dbReference type="Antibodypedia" id="1985">
    <property type="antibodies" value="332 antibodies from 37 providers"/>
</dbReference>
<dbReference type="DNASU" id="228357"/>
<dbReference type="Ensembl" id="ENSMUST00000028689.4">
    <molecule id="Q8VI56-1"/>
    <property type="protein sequence ID" value="ENSMUSP00000028689.4"/>
    <property type="gene ID" value="ENSMUSG00000027253.16"/>
</dbReference>
<dbReference type="GeneID" id="228357"/>
<dbReference type="KEGG" id="mmu:228357"/>
<dbReference type="UCSC" id="uc008kvx.2">
    <molecule id="Q8VI56-1"/>
    <property type="organism name" value="mouse"/>
</dbReference>
<dbReference type="AGR" id="MGI:2442252"/>
<dbReference type="CTD" id="4038"/>
<dbReference type="MGI" id="MGI:2442252">
    <property type="gene designation" value="Lrp4"/>
</dbReference>
<dbReference type="VEuPathDB" id="HostDB:ENSMUSG00000027253"/>
<dbReference type="eggNOG" id="KOG1215">
    <property type="taxonomic scope" value="Eukaryota"/>
</dbReference>
<dbReference type="GeneTree" id="ENSGT00940000158287"/>
<dbReference type="HOGENOM" id="CLU_000085_4_1_1"/>
<dbReference type="InParanoid" id="Q8VI56"/>
<dbReference type="OMA" id="NNRYTAI"/>
<dbReference type="OrthoDB" id="664115at2759"/>
<dbReference type="PhylomeDB" id="Q8VI56"/>
<dbReference type="TreeFam" id="TF315253"/>
<dbReference type="BioGRID-ORCS" id="228357">
    <property type="hits" value="1 hit in 81 CRISPR screens"/>
</dbReference>
<dbReference type="ChiTaRS" id="Lrp4">
    <property type="organism name" value="mouse"/>
</dbReference>
<dbReference type="PRO" id="PR:Q8VI56"/>
<dbReference type="Proteomes" id="UP000000589">
    <property type="component" value="Chromosome 2"/>
</dbReference>
<dbReference type="RNAct" id="Q8VI56">
    <property type="molecule type" value="protein"/>
</dbReference>
<dbReference type="Bgee" id="ENSMUSG00000027253">
    <property type="expression patterns" value="Expressed in glomerular capsule and 226 other cell types or tissues"/>
</dbReference>
<dbReference type="GO" id="GO:0009986">
    <property type="term" value="C:cell surface"/>
    <property type="evidence" value="ECO:0000250"/>
    <property type="project" value="UniProtKB"/>
</dbReference>
<dbReference type="GO" id="GO:0030425">
    <property type="term" value="C:dendrite"/>
    <property type="evidence" value="ECO:0000250"/>
    <property type="project" value="UniProtKB"/>
</dbReference>
<dbReference type="GO" id="GO:0031594">
    <property type="term" value="C:neuromuscular junction"/>
    <property type="evidence" value="ECO:0000314"/>
    <property type="project" value="UniProtKB"/>
</dbReference>
<dbReference type="GO" id="GO:0043025">
    <property type="term" value="C:neuronal cell body"/>
    <property type="evidence" value="ECO:0000250"/>
    <property type="project" value="UniProtKB"/>
</dbReference>
<dbReference type="GO" id="GO:0005886">
    <property type="term" value="C:plasma membrane"/>
    <property type="evidence" value="ECO:0000314"/>
    <property type="project" value="UniProtKB"/>
</dbReference>
<dbReference type="GO" id="GO:0044853">
    <property type="term" value="C:plasma membrane raft"/>
    <property type="evidence" value="ECO:0000250"/>
    <property type="project" value="UniProtKB"/>
</dbReference>
<dbReference type="GO" id="GO:0014069">
    <property type="term" value="C:postsynaptic density"/>
    <property type="evidence" value="ECO:0000250"/>
    <property type="project" value="UniProtKB"/>
</dbReference>
<dbReference type="GO" id="GO:0045202">
    <property type="term" value="C:synapse"/>
    <property type="evidence" value="ECO:0000314"/>
    <property type="project" value="SynGO"/>
</dbReference>
<dbReference type="GO" id="GO:0097060">
    <property type="term" value="C:synaptic membrane"/>
    <property type="evidence" value="ECO:0000250"/>
    <property type="project" value="UniProtKB"/>
</dbReference>
<dbReference type="GO" id="GO:0034185">
    <property type="term" value="F:apolipoprotein binding"/>
    <property type="evidence" value="ECO:0007669"/>
    <property type="project" value="Ensembl"/>
</dbReference>
<dbReference type="GO" id="GO:0005509">
    <property type="term" value="F:calcium ion binding"/>
    <property type="evidence" value="ECO:0007669"/>
    <property type="project" value="InterPro"/>
</dbReference>
<dbReference type="GO" id="GO:0015026">
    <property type="term" value="F:coreceptor activity"/>
    <property type="evidence" value="ECO:0000314"/>
    <property type="project" value="MGI"/>
</dbReference>
<dbReference type="GO" id="GO:0042803">
    <property type="term" value="F:protein homodimerization activity"/>
    <property type="evidence" value="ECO:0000314"/>
    <property type="project" value="UniProtKB"/>
</dbReference>
<dbReference type="GO" id="GO:0030971">
    <property type="term" value="F:receptor tyrosine kinase binding"/>
    <property type="evidence" value="ECO:0000353"/>
    <property type="project" value="UniProtKB"/>
</dbReference>
<dbReference type="GO" id="GO:0097110">
    <property type="term" value="F:scaffold protein binding"/>
    <property type="evidence" value="ECO:0000250"/>
    <property type="project" value="UniProtKB"/>
</dbReference>
<dbReference type="GO" id="GO:0150094">
    <property type="term" value="P:amyloid-beta clearance by cellular catabolic process"/>
    <property type="evidence" value="ECO:0007669"/>
    <property type="project" value="Ensembl"/>
</dbReference>
<dbReference type="GO" id="GO:0048813">
    <property type="term" value="P:dendrite morphogenesis"/>
    <property type="evidence" value="ECO:0000250"/>
    <property type="project" value="UniProtKB"/>
</dbReference>
<dbReference type="GO" id="GO:0009953">
    <property type="term" value="P:dorsal/ventral pattern formation"/>
    <property type="evidence" value="ECO:0000315"/>
    <property type="project" value="MGI"/>
</dbReference>
<dbReference type="GO" id="GO:0042733">
    <property type="term" value="P:embryonic digit morphogenesis"/>
    <property type="evidence" value="ECO:0000315"/>
    <property type="project" value="MGI"/>
</dbReference>
<dbReference type="GO" id="GO:0030326">
    <property type="term" value="P:embryonic limb morphogenesis"/>
    <property type="evidence" value="ECO:0000315"/>
    <property type="project" value="MGI"/>
</dbReference>
<dbReference type="GO" id="GO:0006897">
    <property type="term" value="P:endocytosis"/>
    <property type="evidence" value="ECO:0007669"/>
    <property type="project" value="UniProtKB-KW"/>
</dbReference>
<dbReference type="GO" id="GO:0007167">
    <property type="term" value="P:enzyme-linked receptor protein signaling pathway"/>
    <property type="evidence" value="ECO:0000314"/>
    <property type="project" value="MGI"/>
</dbReference>
<dbReference type="GO" id="GO:0001942">
    <property type="term" value="P:hair follicle development"/>
    <property type="evidence" value="ECO:0000315"/>
    <property type="project" value="MGI"/>
</dbReference>
<dbReference type="GO" id="GO:0001822">
    <property type="term" value="P:kidney development"/>
    <property type="evidence" value="ECO:0000315"/>
    <property type="project" value="MGI"/>
</dbReference>
<dbReference type="GO" id="GO:0050771">
    <property type="term" value="P:negative regulation of axonogenesis"/>
    <property type="evidence" value="ECO:0000315"/>
    <property type="project" value="UniProtKB"/>
</dbReference>
<dbReference type="GO" id="GO:0090090">
    <property type="term" value="P:negative regulation of canonical Wnt signaling pathway"/>
    <property type="evidence" value="ECO:0000314"/>
    <property type="project" value="MGI"/>
</dbReference>
<dbReference type="GO" id="GO:0030279">
    <property type="term" value="P:negative regulation of ossification"/>
    <property type="evidence" value="ECO:0007669"/>
    <property type="project" value="Ensembl"/>
</dbReference>
<dbReference type="GO" id="GO:0042475">
    <property type="term" value="P:odontogenesis of dentin-containing tooth"/>
    <property type="evidence" value="ECO:0000315"/>
    <property type="project" value="MGI"/>
</dbReference>
<dbReference type="GO" id="GO:0050731">
    <property type="term" value="P:positive regulation of peptidyl-tyrosine phosphorylation"/>
    <property type="evidence" value="ECO:0000315"/>
    <property type="project" value="UniProtKB"/>
</dbReference>
<dbReference type="GO" id="GO:1901631">
    <property type="term" value="P:positive regulation of presynaptic membrane organization"/>
    <property type="evidence" value="ECO:0000314"/>
    <property type="project" value="UniProtKB"/>
</dbReference>
<dbReference type="GO" id="GO:0035022">
    <property type="term" value="P:positive regulation of Rac protein signal transduction"/>
    <property type="evidence" value="ECO:0000314"/>
    <property type="project" value="MGI"/>
</dbReference>
<dbReference type="GO" id="GO:1904395">
    <property type="term" value="P:positive regulation of skeletal muscle acetylcholine-gated channel clustering"/>
    <property type="evidence" value="ECO:0000314"/>
    <property type="project" value="MGI"/>
</dbReference>
<dbReference type="GO" id="GO:0097104">
    <property type="term" value="P:postsynaptic membrane assembly"/>
    <property type="evidence" value="ECO:0000315"/>
    <property type="project" value="UniProtKB"/>
</dbReference>
<dbReference type="GO" id="GO:0097105">
    <property type="term" value="P:presynaptic membrane assembly"/>
    <property type="evidence" value="ECO:0000315"/>
    <property type="project" value="UniProtKB"/>
</dbReference>
<dbReference type="GO" id="GO:0008104">
    <property type="term" value="P:protein localization"/>
    <property type="evidence" value="ECO:0000315"/>
    <property type="project" value="MGI"/>
</dbReference>
<dbReference type="GO" id="GO:0009954">
    <property type="term" value="P:proximal/distal pattern formation"/>
    <property type="evidence" value="ECO:0000315"/>
    <property type="project" value="MGI"/>
</dbReference>
<dbReference type="GO" id="GO:0043113">
    <property type="term" value="P:receptor clustering"/>
    <property type="evidence" value="ECO:0000315"/>
    <property type="project" value="MGI"/>
</dbReference>
<dbReference type="GO" id="GO:0150052">
    <property type="term" value="P:regulation of postsynapse assembly"/>
    <property type="evidence" value="ECO:0000314"/>
    <property type="project" value="SynGO"/>
</dbReference>
<dbReference type="GO" id="GO:0001932">
    <property type="term" value="P:regulation of protein phosphorylation"/>
    <property type="evidence" value="ECO:0000315"/>
    <property type="project" value="UniProtKB"/>
</dbReference>
<dbReference type="GO" id="GO:0071340">
    <property type="term" value="P:skeletal muscle acetylcholine-gated channel clustering"/>
    <property type="evidence" value="ECO:0000315"/>
    <property type="project" value="UniProtKB"/>
</dbReference>
<dbReference type="GO" id="GO:0050808">
    <property type="term" value="P:synapse organization"/>
    <property type="evidence" value="ECO:0000250"/>
    <property type="project" value="UniProtKB"/>
</dbReference>
<dbReference type="GO" id="GO:0051124">
    <property type="term" value="P:synaptic assembly at neuromuscular junction"/>
    <property type="evidence" value="ECO:0000314"/>
    <property type="project" value="UniProtKB"/>
</dbReference>
<dbReference type="GO" id="GO:0016055">
    <property type="term" value="P:Wnt signaling pathway"/>
    <property type="evidence" value="ECO:0000314"/>
    <property type="project" value="MGI"/>
</dbReference>
<dbReference type="CDD" id="cd00054">
    <property type="entry name" value="EGF_CA"/>
    <property type="match status" value="1"/>
</dbReference>
<dbReference type="CDD" id="cd00112">
    <property type="entry name" value="LDLa"/>
    <property type="match status" value="7"/>
</dbReference>
<dbReference type="FunFam" id="2.120.10.30:FF:000029">
    <property type="entry name" value="LDL receptor related protein 4"/>
    <property type="match status" value="1"/>
</dbReference>
<dbReference type="FunFam" id="4.10.400.10:FF:000017">
    <property type="entry name" value="LDL receptor related protein 4"/>
    <property type="match status" value="2"/>
</dbReference>
<dbReference type="FunFam" id="4.10.400.10:FF:000092">
    <property type="entry name" value="LDL receptor related protein 4"/>
    <property type="match status" value="1"/>
</dbReference>
<dbReference type="FunFam" id="2.10.25.10:FF:000009">
    <property type="entry name" value="Low-density lipoprotein receptor isoform 1"/>
    <property type="match status" value="1"/>
</dbReference>
<dbReference type="FunFam" id="4.10.400.10:FF:000009">
    <property type="entry name" value="Low-density lipoprotein receptor-related protein 1"/>
    <property type="match status" value="1"/>
</dbReference>
<dbReference type="FunFam" id="4.10.400.10:FF:000034">
    <property type="entry name" value="Low-density lipoprotein receptor-related protein 2"/>
    <property type="match status" value="1"/>
</dbReference>
<dbReference type="FunFam" id="2.120.10.30:FF:000008">
    <property type="entry name" value="Low-density lipoprotein receptor-related protein 4"/>
    <property type="match status" value="3"/>
</dbReference>
<dbReference type="FunFam" id="4.10.400.10:FF:000085">
    <property type="entry name" value="low-density lipoprotein receptor-related protein 4"/>
    <property type="match status" value="1"/>
</dbReference>
<dbReference type="FunFam" id="4.10.400.10:FF:000098">
    <property type="entry name" value="low-density lipoprotein receptor-related protein 4"/>
    <property type="match status" value="1"/>
</dbReference>
<dbReference type="FunFam" id="4.10.400.10:FF:000006">
    <property type="entry name" value="Putative low-density lipoprotein receptor"/>
    <property type="match status" value="1"/>
</dbReference>
<dbReference type="Gene3D" id="2.10.25.10">
    <property type="entry name" value="Laminin"/>
    <property type="match status" value="2"/>
</dbReference>
<dbReference type="Gene3D" id="4.10.400.10">
    <property type="entry name" value="Low-density Lipoprotein Receptor"/>
    <property type="match status" value="8"/>
</dbReference>
<dbReference type="Gene3D" id="2.120.10.30">
    <property type="entry name" value="TolB, C-terminal domain"/>
    <property type="match status" value="4"/>
</dbReference>
<dbReference type="InterPro" id="IPR011042">
    <property type="entry name" value="6-blade_b-propeller_TolB-like"/>
</dbReference>
<dbReference type="InterPro" id="IPR026823">
    <property type="entry name" value="cEGF"/>
</dbReference>
<dbReference type="InterPro" id="IPR001881">
    <property type="entry name" value="EGF-like_Ca-bd_dom"/>
</dbReference>
<dbReference type="InterPro" id="IPR000742">
    <property type="entry name" value="EGF-like_dom"/>
</dbReference>
<dbReference type="InterPro" id="IPR018097">
    <property type="entry name" value="EGF_Ca-bd_CS"/>
</dbReference>
<dbReference type="InterPro" id="IPR009030">
    <property type="entry name" value="Growth_fac_rcpt_cys_sf"/>
</dbReference>
<dbReference type="InterPro" id="IPR036055">
    <property type="entry name" value="LDL_receptor-like_sf"/>
</dbReference>
<dbReference type="InterPro" id="IPR051221">
    <property type="entry name" value="LDLR-related"/>
</dbReference>
<dbReference type="InterPro" id="IPR023415">
    <property type="entry name" value="LDLR_class-A_CS"/>
</dbReference>
<dbReference type="InterPro" id="IPR000033">
    <property type="entry name" value="LDLR_classB_rpt"/>
</dbReference>
<dbReference type="InterPro" id="IPR002172">
    <property type="entry name" value="LDrepeatLR_classA_rpt"/>
</dbReference>
<dbReference type="PANTHER" id="PTHR22722:SF15">
    <property type="entry name" value="LOW-DENSITY LIPOPROTEIN RECEPTOR-RELATED"/>
    <property type="match status" value="1"/>
</dbReference>
<dbReference type="PANTHER" id="PTHR22722">
    <property type="entry name" value="LOW-DENSITY LIPOPROTEIN RECEPTOR-RELATED PROTEIN 2-RELATED"/>
    <property type="match status" value="1"/>
</dbReference>
<dbReference type="Pfam" id="PF12662">
    <property type="entry name" value="cEGF"/>
    <property type="match status" value="1"/>
</dbReference>
<dbReference type="Pfam" id="PF14670">
    <property type="entry name" value="FXa_inhibition"/>
    <property type="match status" value="2"/>
</dbReference>
<dbReference type="Pfam" id="PF00057">
    <property type="entry name" value="Ldl_recept_a"/>
    <property type="match status" value="8"/>
</dbReference>
<dbReference type="Pfam" id="PF00058">
    <property type="entry name" value="Ldl_recept_b"/>
    <property type="match status" value="16"/>
</dbReference>
<dbReference type="PRINTS" id="PR00261">
    <property type="entry name" value="LDLRECEPTOR"/>
</dbReference>
<dbReference type="SMART" id="SM00181">
    <property type="entry name" value="EGF"/>
    <property type="match status" value="7"/>
</dbReference>
<dbReference type="SMART" id="SM00179">
    <property type="entry name" value="EGF_CA"/>
    <property type="match status" value="3"/>
</dbReference>
<dbReference type="SMART" id="SM00192">
    <property type="entry name" value="LDLa"/>
    <property type="match status" value="8"/>
</dbReference>
<dbReference type="SMART" id="SM00135">
    <property type="entry name" value="LY"/>
    <property type="match status" value="20"/>
</dbReference>
<dbReference type="SUPFAM" id="SSF57196">
    <property type="entry name" value="EGF/Laminin"/>
    <property type="match status" value="2"/>
</dbReference>
<dbReference type="SUPFAM" id="SSF57184">
    <property type="entry name" value="Growth factor receptor domain"/>
    <property type="match status" value="1"/>
</dbReference>
<dbReference type="SUPFAM" id="SSF57424">
    <property type="entry name" value="LDL receptor-like module"/>
    <property type="match status" value="8"/>
</dbReference>
<dbReference type="SUPFAM" id="SSF63825">
    <property type="entry name" value="YWTD domain"/>
    <property type="match status" value="4"/>
</dbReference>
<dbReference type="PROSITE" id="PS00010">
    <property type="entry name" value="ASX_HYDROXYL"/>
    <property type="match status" value="1"/>
</dbReference>
<dbReference type="PROSITE" id="PS00022">
    <property type="entry name" value="EGF_1"/>
    <property type="match status" value="1"/>
</dbReference>
<dbReference type="PROSITE" id="PS01186">
    <property type="entry name" value="EGF_2"/>
    <property type="match status" value="3"/>
</dbReference>
<dbReference type="PROSITE" id="PS01187">
    <property type="entry name" value="EGF_CA"/>
    <property type="match status" value="1"/>
</dbReference>
<dbReference type="PROSITE" id="PS01209">
    <property type="entry name" value="LDLRA_1"/>
    <property type="match status" value="8"/>
</dbReference>
<dbReference type="PROSITE" id="PS50068">
    <property type="entry name" value="LDLRA_2"/>
    <property type="match status" value="8"/>
</dbReference>
<dbReference type="PROSITE" id="PS51120">
    <property type="entry name" value="LDLRB"/>
    <property type="match status" value="20"/>
</dbReference>
<accession>Q8VI56</accession>
<accession>A2AGT4</accession>
<accession>Q8BPX5</accession>
<accession>Q8CBB3</accession>
<accession>Q8CCP5</accession>
<protein>
    <recommendedName>
        <fullName>Low-density lipoprotein receptor-related protein 4</fullName>
        <shortName>LRP-4</shortName>
    </recommendedName>
    <alternativeName>
        <fullName>LDLR dan</fullName>
    </alternativeName>
</protein>
<feature type="signal peptide" evidence="2">
    <location>
        <begin position="1"/>
        <end position="20"/>
    </location>
</feature>
<feature type="chain" id="PRO_0000017326" description="Low-density lipoprotein receptor-related protein 4">
    <location>
        <begin position="21"/>
        <end position="1905"/>
    </location>
</feature>
<feature type="topological domain" description="Extracellular" evidence="2">
    <location>
        <begin position="21"/>
        <end position="1725"/>
    </location>
</feature>
<feature type="transmembrane region" description="Helical" evidence="2">
    <location>
        <begin position="1726"/>
        <end position="1746"/>
    </location>
</feature>
<feature type="topological domain" description="Cytoplasmic" evidence="2">
    <location>
        <begin position="1747"/>
        <end position="1905"/>
    </location>
</feature>
<feature type="domain" description="LDL-receptor class A 1" evidence="3">
    <location>
        <begin position="26"/>
        <end position="67"/>
    </location>
</feature>
<feature type="domain" description="LDL-receptor class A 2" evidence="3">
    <location>
        <begin position="70"/>
        <end position="106"/>
    </location>
</feature>
<feature type="domain" description="LDL-receptor class A 3" evidence="3">
    <location>
        <begin position="109"/>
        <end position="144"/>
    </location>
</feature>
<feature type="domain" description="LDL-receptor class A 4" evidence="3">
    <location>
        <begin position="147"/>
        <end position="183"/>
    </location>
</feature>
<feature type="domain" description="LDL-receptor class A 5" evidence="3">
    <location>
        <begin position="190"/>
        <end position="226"/>
    </location>
</feature>
<feature type="domain" description="LDL-receptor class A 6" evidence="3">
    <location>
        <begin position="230"/>
        <end position="266"/>
    </location>
</feature>
<feature type="domain" description="LDL-receptor class A 7" evidence="3">
    <location>
        <begin position="269"/>
        <end position="305"/>
    </location>
</feature>
<feature type="domain" description="LDL-receptor class A 8" evidence="3">
    <location>
        <begin position="311"/>
        <end position="350"/>
    </location>
</feature>
<feature type="domain" description="EGF-like 1; atypical">
    <location>
        <begin position="354"/>
        <end position="394"/>
    </location>
</feature>
<feature type="domain" description="EGF-like 2; calcium-binding">
    <location>
        <begin position="395"/>
        <end position="434"/>
    </location>
</feature>
<feature type="repeat" description="LDL-receptor class B 1">
    <location>
        <begin position="480"/>
        <end position="522"/>
    </location>
</feature>
<feature type="repeat" description="LDL-receptor class B 2">
    <location>
        <begin position="523"/>
        <end position="565"/>
    </location>
</feature>
<feature type="repeat" description="LDL-receptor class B 3">
    <location>
        <begin position="566"/>
        <end position="609"/>
    </location>
</feature>
<feature type="repeat" description="LDL-receptor class B 4">
    <location>
        <begin position="610"/>
        <end position="652"/>
    </location>
</feature>
<feature type="repeat" description="LDL-receptor class B 5">
    <location>
        <begin position="653"/>
        <end position="693"/>
    </location>
</feature>
<feature type="domain" description="EGF-like 3">
    <location>
        <begin position="698"/>
        <end position="737"/>
    </location>
</feature>
<feature type="repeat" description="LDL-receptor class B 6">
    <location>
        <begin position="785"/>
        <end position="827"/>
    </location>
</feature>
<feature type="repeat" description="LDL-receptor class B 7">
    <location>
        <begin position="828"/>
        <end position="870"/>
    </location>
</feature>
<feature type="repeat" description="LDL-receptor class B 8">
    <location>
        <begin position="871"/>
        <end position="914"/>
    </location>
</feature>
<feature type="repeat" description="LDL-receptor class B 9">
    <location>
        <begin position="915"/>
        <end position="956"/>
    </location>
</feature>
<feature type="repeat" description="LDL-receptor class B 10">
    <location>
        <begin position="957"/>
        <end position="998"/>
    </location>
</feature>
<feature type="repeat" description="LDL-receptor class B 11">
    <location>
        <begin position="1093"/>
        <end position="1135"/>
    </location>
</feature>
<feature type="repeat" description="LDL-receptor class B 12">
    <location>
        <begin position="1136"/>
        <end position="1178"/>
    </location>
</feature>
<feature type="repeat" description="LDL-receptor class B 13">
    <location>
        <begin position="1179"/>
        <end position="1222"/>
    </location>
</feature>
<feature type="repeat" description="LDL-receptor class B 14">
    <location>
        <begin position="1223"/>
        <end position="1263"/>
    </location>
</feature>
<feature type="repeat" description="LDL-receptor class B 15">
    <location>
        <begin position="1264"/>
        <end position="1306"/>
    </location>
</feature>
<feature type="repeat" description="LDL-receptor class B 16">
    <location>
        <begin position="1397"/>
        <end position="1439"/>
    </location>
</feature>
<feature type="repeat" description="LDL-receptor class B 17">
    <location>
        <begin position="1440"/>
        <end position="1482"/>
    </location>
</feature>
<feature type="repeat" description="LDL-receptor class B 18">
    <location>
        <begin position="1483"/>
        <end position="1526"/>
    </location>
</feature>
<feature type="repeat" description="LDL-receptor class B 19">
    <location>
        <begin position="1527"/>
        <end position="1568"/>
    </location>
</feature>
<feature type="repeat" description="LDL-receptor class B 20">
    <location>
        <begin position="1569"/>
        <end position="1610"/>
    </location>
</feature>
<feature type="region of interest" description="Disordered" evidence="4">
    <location>
        <begin position="1661"/>
        <end position="1696"/>
    </location>
</feature>
<feature type="region of interest" description="Disordered" evidence="4">
    <location>
        <begin position="1852"/>
        <end position="1905"/>
    </location>
</feature>
<feature type="compositionally biased region" description="Low complexity" evidence="4">
    <location>
        <begin position="1674"/>
        <end position="1690"/>
    </location>
</feature>
<feature type="compositionally biased region" description="Basic and acidic residues" evidence="4">
    <location>
        <begin position="1882"/>
        <end position="1905"/>
    </location>
</feature>
<feature type="glycosylation site" description="N-linked (GlcNAc...) asparagine" evidence="2">
    <location>
        <position position="264"/>
    </location>
</feature>
<feature type="glycosylation site" description="N-linked (GlcNAc...) asparagine" evidence="2">
    <location>
        <position position="498"/>
    </location>
</feature>
<feature type="glycosylation site" description="N-linked (GlcNAc...) asparagine" evidence="2">
    <location>
        <position position="719"/>
    </location>
</feature>
<feature type="glycosylation site" description="N-linked (GlcNAc...) asparagine" evidence="2">
    <location>
        <position position="901"/>
    </location>
</feature>
<feature type="glycosylation site" description="N-linked (GlcNAc...) asparagine" evidence="2">
    <location>
        <position position="1077"/>
    </location>
</feature>
<feature type="glycosylation site" description="N-linked (GlcNAc...) asparagine" evidence="2">
    <location>
        <position position="1415"/>
    </location>
</feature>
<feature type="glycosylation site" description="N-linked (GlcNAc...) asparagine" evidence="2">
    <location>
        <position position="1467"/>
    </location>
</feature>
<feature type="disulfide bond" evidence="3">
    <location>
        <begin position="27"/>
        <end position="44"/>
    </location>
</feature>
<feature type="disulfide bond" evidence="3">
    <location>
        <begin position="34"/>
        <end position="57"/>
    </location>
</feature>
<feature type="disulfide bond" evidence="3">
    <location>
        <begin position="51"/>
        <end position="66"/>
    </location>
</feature>
<feature type="disulfide bond" evidence="3">
    <location>
        <begin position="71"/>
        <end position="83"/>
    </location>
</feature>
<feature type="disulfide bond" evidence="3">
    <location>
        <begin position="78"/>
        <end position="96"/>
    </location>
</feature>
<feature type="disulfide bond" evidence="3">
    <location>
        <begin position="90"/>
        <end position="105"/>
    </location>
</feature>
<feature type="disulfide bond" evidence="3">
    <location>
        <begin position="110"/>
        <end position="122"/>
    </location>
</feature>
<feature type="disulfide bond" evidence="3">
    <location>
        <begin position="117"/>
        <end position="135"/>
    </location>
</feature>
<feature type="disulfide bond" evidence="3">
    <location>
        <begin position="129"/>
        <end position="143"/>
    </location>
</feature>
<feature type="disulfide bond" evidence="3">
    <location>
        <begin position="148"/>
        <end position="160"/>
    </location>
</feature>
<feature type="disulfide bond" evidence="3">
    <location>
        <begin position="155"/>
        <end position="173"/>
    </location>
</feature>
<feature type="disulfide bond" evidence="3">
    <location>
        <begin position="167"/>
        <end position="182"/>
    </location>
</feature>
<feature type="disulfide bond" evidence="3">
    <location>
        <begin position="191"/>
        <end position="203"/>
    </location>
</feature>
<feature type="disulfide bond" evidence="3">
    <location>
        <begin position="198"/>
        <end position="216"/>
    </location>
</feature>
<feature type="disulfide bond" evidence="3">
    <location>
        <begin position="210"/>
        <end position="225"/>
    </location>
</feature>
<feature type="disulfide bond" evidence="3">
    <location>
        <begin position="231"/>
        <end position="243"/>
    </location>
</feature>
<feature type="disulfide bond" evidence="3">
    <location>
        <begin position="238"/>
        <end position="256"/>
    </location>
</feature>
<feature type="disulfide bond" evidence="3">
    <location>
        <begin position="250"/>
        <end position="265"/>
    </location>
</feature>
<feature type="disulfide bond" evidence="3">
    <location>
        <begin position="270"/>
        <end position="282"/>
    </location>
</feature>
<feature type="disulfide bond" evidence="3">
    <location>
        <begin position="277"/>
        <end position="295"/>
    </location>
</feature>
<feature type="disulfide bond" evidence="3">
    <location>
        <begin position="289"/>
        <end position="304"/>
    </location>
</feature>
<feature type="disulfide bond" evidence="3">
    <location>
        <begin position="312"/>
        <end position="324"/>
    </location>
</feature>
<feature type="disulfide bond" evidence="3">
    <location>
        <begin position="319"/>
        <end position="337"/>
    </location>
</feature>
<feature type="disulfide bond" evidence="3">
    <location>
        <begin position="331"/>
        <end position="349"/>
    </location>
</feature>
<feature type="disulfide bond" evidence="3">
    <location>
        <begin position="358"/>
        <end position="369"/>
    </location>
</feature>
<feature type="disulfide bond" evidence="3">
    <location>
        <begin position="365"/>
        <end position="378"/>
    </location>
</feature>
<feature type="disulfide bond" evidence="3">
    <location>
        <begin position="380"/>
        <end position="393"/>
    </location>
</feature>
<feature type="disulfide bond" evidence="3">
    <location>
        <begin position="399"/>
        <end position="409"/>
    </location>
</feature>
<feature type="disulfide bond" evidence="3">
    <location>
        <begin position="405"/>
        <end position="418"/>
    </location>
</feature>
<feature type="disulfide bond" evidence="3">
    <location>
        <begin position="420"/>
        <end position="433"/>
    </location>
</feature>
<feature type="disulfide bond" evidence="3">
    <location>
        <begin position="702"/>
        <end position="713"/>
    </location>
</feature>
<feature type="disulfide bond" evidence="3">
    <location>
        <begin position="709"/>
        <end position="722"/>
    </location>
</feature>
<feature type="disulfide bond" evidence="3">
    <location>
        <begin position="724"/>
        <end position="736"/>
    </location>
</feature>
<feature type="splice variant" id="VSP_010034" description="In isoform 2." evidence="9">
    <location>
        <begin position="1564"/>
        <end position="1620"/>
    </location>
</feature>
<feature type="sequence conflict" description="In Ref. 4; BAC27835." evidence="10" ref="4">
    <original>F</original>
    <variation>L</variation>
    <location>
        <position position="196"/>
    </location>
</feature>
<feature type="sequence conflict" description="In Ref. 4; BAC29416." evidence="10" ref="4">
    <original>I</original>
    <variation>L</variation>
    <location>
        <position position="325"/>
    </location>
</feature>
<feature type="sequence conflict" description="In Ref. 1; AAL36970." evidence="10" ref="1">
    <original>C</original>
    <variation>R</variation>
    <location>
        <position position="380"/>
    </location>
</feature>
<feature type="sequence conflict" description="In Ref. 5." evidence="10" ref="5">
    <original>HFPM</original>
    <variation>LHTP</variation>
    <location>
        <begin position="682"/>
        <end position="685"/>
    </location>
</feature>
<feature type="sequence conflict" description="In Ref. 1; AAL36970." evidence="10" ref="1">
    <original>G</original>
    <variation>S</variation>
    <location>
        <position position="1330"/>
    </location>
</feature>
<proteinExistence type="evidence at protein level"/>